<accession>B5XKX3</accession>
<organism>
    <name type="scientific">Streptococcus pyogenes serotype M49 (strain NZ131)</name>
    <dbReference type="NCBI Taxonomy" id="471876"/>
    <lineage>
        <taxon>Bacteria</taxon>
        <taxon>Bacillati</taxon>
        <taxon>Bacillota</taxon>
        <taxon>Bacilli</taxon>
        <taxon>Lactobacillales</taxon>
        <taxon>Streptococcaceae</taxon>
        <taxon>Streptococcus</taxon>
    </lineage>
</organism>
<sequence length="172" mass="19938">MEYFNVGKIVNTQGLQGEMRVLSVSDFAEERFKKGSQLALFDDKDQFVQEVTIVSHRKQKNFDIIKFKDMYHINAIEKYKGYTLKVSKANQGDLQEGEFYYHQIIGMPVYEKDRLIGYVKEILQPGANDVWVVKRQGKRDLLLPYIPPVVLNVDVPNKCVDVELMEGLDDED</sequence>
<protein>
    <recommendedName>
        <fullName evidence="1">Ribosome maturation factor RimM</fullName>
    </recommendedName>
</protein>
<feature type="chain" id="PRO_1000089528" description="Ribosome maturation factor RimM">
    <location>
        <begin position="1"/>
        <end position="172"/>
    </location>
</feature>
<feature type="domain" description="PRC barrel" evidence="1">
    <location>
        <begin position="95"/>
        <end position="168"/>
    </location>
</feature>
<proteinExistence type="inferred from homology"/>
<reference key="1">
    <citation type="journal article" date="2008" name="J. Bacteriol.">
        <title>Genome sequence of a nephritogenic and highly transformable M49 strain of Streptococcus pyogenes.</title>
        <authorList>
            <person name="McShan W.M."/>
            <person name="Ferretti J.J."/>
            <person name="Karasawa T."/>
            <person name="Suvorov A.N."/>
            <person name="Lin S."/>
            <person name="Qin B."/>
            <person name="Jia H."/>
            <person name="Kenton S."/>
            <person name="Najar F."/>
            <person name="Wu H."/>
            <person name="Scott J."/>
            <person name="Roe B.A."/>
            <person name="Savic D.J."/>
        </authorList>
    </citation>
    <scope>NUCLEOTIDE SEQUENCE [LARGE SCALE GENOMIC DNA]</scope>
    <source>
        <strain>NZ131</strain>
    </source>
</reference>
<comment type="function">
    <text evidence="1">An accessory protein needed during the final step in the assembly of 30S ribosomal subunit, possibly for assembly of the head region. Essential for efficient processing of 16S rRNA. May be needed both before and after RbfA during the maturation of 16S rRNA. It has affinity for free ribosomal 30S subunits but not for 70S ribosomes.</text>
</comment>
<comment type="subunit">
    <text evidence="1">Binds ribosomal protein uS19.</text>
</comment>
<comment type="subcellular location">
    <subcellularLocation>
        <location evidence="1">Cytoplasm</location>
    </subcellularLocation>
</comment>
<comment type="domain">
    <text evidence="1">The PRC barrel domain binds ribosomal protein uS19.</text>
</comment>
<comment type="similarity">
    <text evidence="1">Belongs to the RimM family.</text>
</comment>
<gene>
    <name evidence="1" type="primary">rimM</name>
    <name type="ordered locus">Spy49_0665</name>
</gene>
<name>RIMM_STRPZ</name>
<dbReference type="EMBL" id="CP000829">
    <property type="protein sequence ID" value="ACI60985.1"/>
    <property type="molecule type" value="Genomic_DNA"/>
</dbReference>
<dbReference type="SMR" id="B5XKX3"/>
<dbReference type="KEGG" id="soz:Spy49_0665"/>
<dbReference type="HOGENOM" id="CLU_077636_3_1_9"/>
<dbReference type="Proteomes" id="UP000001039">
    <property type="component" value="Chromosome"/>
</dbReference>
<dbReference type="GO" id="GO:0005737">
    <property type="term" value="C:cytoplasm"/>
    <property type="evidence" value="ECO:0007669"/>
    <property type="project" value="UniProtKB-SubCell"/>
</dbReference>
<dbReference type="GO" id="GO:0005840">
    <property type="term" value="C:ribosome"/>
    <property type="evidence" value="ECO:0007669"/>
    <property type="project" value="InterPro"/>
</dbReference>
<dbReference type="GO" id="GO:0043022">
    <property type="term" value="F:ribosome binding"/>
    <property type="evidence" value="ECO:0007669"/>
    <property type="project" value="InterPro"/>
</dbReference>
<dbReference type="GO" id="GO:0042274">
    <property type="term" value="P:ribosomal small subunit biogenesis"/>
    <property type="evidence" value="ECO:0007669"/>
    <property type="project" value="UniProtKB-UniRule"/>
</dbReference>
<dbReference type="GO" id="GO:0006364">
    <property type="term" value="P:rRNA processing"/>
    <property type="evidence" value="ECO:0007669"/>
    <property type="project" value="UniProtKB-UniRule"/>
</dbReference>
<dbReference type="Gene3D" id="2.30.30.240">
    <property type="entry name" value="PRC-barrel domain"/>
    <property type="match status" value="1"/>
</dbReference>
<dbReference type="Gene3D" id="2.40.30.60">
    <property type="entry name" value="RimM"/>
    <property type="match status" value="1"/>
</dbReference>
<dbReference type="HAMAP" id="MF_00014">
    <property type="entry name" value="Ribosome_mat_RimM"/>
    <property type="match status" value="1"/>
</dbReference>
<dbReference type="InterPro" id="IPR027275">
    <property type="entry name" value="PRC-brl_dom"/>
</dbReference>
<dbReference type="InterPro" id="IPR011033">
    <property type="entry name" value="PRC_barrel-like_sf"/>
</dbReference>
<dbReference type="InterPro" id="IPR011961">
    <property type="entry name" value="RimM"/>
</dbReference>
<dbReference type="InterPro" id="IPR002676">
    <property type="entry name" value="RimM_N"/>
</dbReference>
<dbReference type="InterPro" id="IPR036976">
    <property type="entry name" value="RimM_N_sf"/>
</dbReference>
<dbReference type="InterPro" id="IPR009000">
    <property type="entry name" value="Transl_B-barrel_sf"/>
</dbReference>
<dbReference type="NCBIfam" id="TIGR02273">
    <property type="entry name" value="16S_RimM"/>
    <property type="match status" value="1"/>
</dbReference>
<dbReference type="PANTHER" id="PTHR33692">
    <property type="entry name" value="RIBOSOME MATURATION FACTOR RIMM"/>
    <property type="match status" value="1"/>
</dbReference>
<dbReference type="PANTHER" id="PTHR33692:SF1">
    <property type="entry name" value="RIBOSOME MATURATION FACTOR RIMM"/>
    <property type="match status" value="1"/>
</dbReference>
<dbReference type="Pfam" id="PF05239">
    <property type="entry name" value="PRC"/>
    <property type="match status" value="1"/>
</dbReference>
<dbReference type="Pfam" id="PF01782">
    <property type="entry name" value="RimM"/>
    <property type="match status" value="1"/>
</dbReference>
<dbReference type="SUPFAM" id="SSF50346">
    <property type="entry name" value="PRC-barrel domain"/>
    <property type="match status" value="1"/>
</dbReference>
<dbReference type="SUPFAM" id="SSF50447">
    <property type="entry name" value="Translation proteins"/>
    <property type="match status" value="1"/>
</dbReference>
<keyword id="KW-0143">Chaperone</keyword>
<keyword id="KW-0963">Cytoplasm</keyword>
<keyword id="KW-0690">Ribosome biogenesis</keyword>
<keyword id="KW-0698">rRNA processing</keyword>
<evidence type="ECO:0000255" key="1">
    <source>
        <dbReference type="HAMAP-Rule" id="MF_00014"/>
    </source>
</evidence>